<name>MINC_XYLF2</name>
<evidence type="ECO:0000255" key="1">
    <source>
        <dbReference type="HAMAP-Rule" id="MF_00267"/>
    </source>
</evidence>
<gene>
    <name evidence="1" type="primary">minC</name>
    <name type="ordered locus">XfasM23_0598</name>
</gene>
<accession>B2I967</accession>
<sequence length="238" mass="26094">MSNVNMDFEQAGELKIGQVGIATLRIRTLNVPRLIQEMSDRVTRAPKLFRRTAVILDFGELPHPPDLATAKALVEGLRAANVLPVAIAYGTNEIDLLSQQLGLPLLSKFRAHYERQEVAAPPPQSTPPISTGRIQHTTVRSGQQLYAEHCDLTILNTVGAGAEVIADGNIHIYGTLRGRAMAGARGNAEMRIFCRDFQAELIAIAGRYKVLDDIPTELRGKAVQVWLEQNQIKIAALD</sequence>
<proteinExistence type="inferred from homology"/>
<dbReference type="EMBL" id="CP001011">
    <property type="protein sequence ID" value="ACB92042.1"/>
    <property type="molecule type" value="Genomic_DNA"/>
</dbReference>
<dbReference type="RefSeq" id="WP_004090597.1">
    <property type="nucleotide sequence ID" value="NC_010577.1"/>
</dbReference>
<dbReference type="SMR" id="B2I967"/>
<dbReference type="GeneID" id="93904283"/>
<dbReference type="KEGG" id="xfn:XfasM23_0598"/>
<dbReference type="HOGENOM" id="CLU_067812_0_1_6"/>
<dbReference type="Proteomes" id="UP000001698">
    <property type="component" value="Chromosome"/>
</dbReference>
<dbReference type="GO" id="GO:0000902">
    <property type="term" value="P:cell morphogenesis"/>
    <property type="evidence" value="ECO:0007669"/>
    <property type="project" value="InterPro"/>
</dbReference>
<dbReference type="GO" id="GO:0000917">
    <property type="term" value="P:division septum assembly"/>
    <property type="evidence" value="ECO:0007669"/>
    <property type="project" value="UniProtKB-KW"/>
</dbReference>
<dbReference type="GO" id="GO:0051302">
    <property type="term" value="P:regulation of cell division"/>
    <property type="evidence" value="ECO:0007669"/>
    <property type="project" value="InterPro"/>
</dbReference>
<dbReference type="GO" id="GO:1901891">
    <property type="term" value="P:regulation of cell septum assembly"/>
    <property type="evidence" value="ECO:0007669"/>
    <property type="project" value="InterPro"/>
</dbReference>
<dbReference type="Gene3D" id="2.160.20.70">
    <property type="match status" value="1"/>
</dbReference>
<dbReference type="Gene3D" id="3.30.70.260">
    <property type="match status" value="1"/>
</dbReference>
<dbReference type="HAMAP" id="MF_00267">
    <property type="entry name" value="MinC"/>
    <property type="match status" value="1"/>
</dbReference>
<dbReference type="InterPro" id="IPR016098">
    <property type="entry name" value="CAP/MinC_C"/>
</dbReference>
<dbReference type="InterPro" id="IPR013033">
    <property type="entry name" value="MinC"/>
</dbReference>
<dbReference type="InterPro" id="IPR036145">
    <property type="entry name" value="MinC_C_sf"/>
</dbReference>
<dbReference type="InterPro" id="IPR007874">
    <property type="entry name" value="MinC_N"/>
</dbReference>
<dbReference type="InterPro" id="IPR005526">
    <property type="entry name" value="Septum_form_inhib_MinC_C"/>
</dbReference>
<dbReference type="NCBIfam" id="TIGR01222">
    <property type="entry name" value="minC"/>
    <property type="match status" value="1"/>
</dbReference>
<dbReference type="PANTHER" id="PTHR34108">
    <property type="entry name" value="SEPTUM SITE-DETERMINING PROTEIN MINC"/>
    <property type="match status" value="1"/>
</dbReference>
<dbReference type="PANTHER" id="PTHR34108:SF1">
    <property type="entry name" value="SEPTUM SITE-DETERMINING PROTEIN MINC"/>
    <property type="match status" value="1"/>
</dbReference>
<dbReference type="Pfam" id="PF03775">
    <property type="entry name" value="MinC_C"/>
    <property type="match status" value="1"/>
</dbReference>
<dbReference type="Pfam" id="PF05209">
    <property type="entry name" value="MinC_N"/>
    <property type="match status" value="1"/>
</dbReference>
<dbReference type="SUPFAM" id="SSF63848">
    <property type="entry name" value="Cell-division inhibitor MinC, C-terminal domain"/>
    <property type="match status" value="1"/>
</dbReference>
<keyword id="KW-0131">Cell cycle</keyword>
<keyword id="KW-0132">Cell division</keyword>
<keyword id="KW-0717">Septation</keyword>
<feature type="chain" id="PRO_1000114301" description="Probable septum site-determining protein MinC">
    <location>
        <begin position="1"/>
        <end position="238"/>
    </location>
</feature>
<organism>
    <name type="scientific">Xylella fastidiosa (strain M23)</name>
    <dbReference type="NCBI Taxonomy" id="405441"/>
    <lineage>
        <taxon>Bacteria</taxon>
        <taxon>Pseudomonadati</taxon>
        <taxon>Pseudomonadota</taxon>
        <taxon>Gammaproteobacteria</taxon>
        <taxon>Lysobacterales</taxon>
        <taxon>Lysobacteraceae</taxon>
        <taxon>Xylella</taxon>
    </lineage>
</organism>
<comment type="function">
    <text evidence="1">Cell division inhibitor that blocks the formation of polar Z ring septums. Rapidly oscillates between the poles of the cell to destabilize FtsZ filaments that have formed before they mature into polar Z rings. Prevents FtsZ polymerization.</text>
</comment>
<comment type="subunit">
    <text evidence="1">Interacts with MinD and FtsZ.</text>
</comment>
<comment type="similarity">
    <text evidence="1">Belongs to the MinC family.</text>
</comment>
<reference key="1">
    <citation type="journal article" date="2010" name="J. Bacteriol.">
        <title>Whole genome sequences of two Xylella fastidiosa strains (M12 and M23) causing almond leaf scorch disease in California.</title>
        <authorList>
            <person name="Chen J."/>
            <person name="Xie G."/>
            <person name="Han S."/>
            <person name="Chertkov O."/>
            <person name="Sims D."/>
            <person name="Civerolo E.L."/>
        </authorList>
    </citation>
    <scope>NUCLEOTIDE SEQUENCE [LARGE SCALE GENOMIC DNA]</scope>
    <source>
        <strain>M23</strain>
    </source>
</reference>
<protein>
    <recommendedName>
        <fullName evidence="1">Probable septum site-determining protein MinC</fullName>
    </recommendedName>
</protein>